<comment type="function">
    <text evidence="1">Catalyzes the cleavage of the glycosidic bond of 2'-deoxyribonucleosides and the transfer of the deoxyribosyl moiety to an acceptor purine or pyrimidine base.</text>
</comment>
<comment type="catalytic activity">
    <reaction>
        <text>2-deoxy-D-ribosyl-base(1) + base(2) = 2-deoxy-D-ribosyl-base(2) + base(1).</text>
        <dbReference type="EC" id="2.4.2.6"/>
    </reaction>
</comment>
<comment type="pathway">
    <text>Nucleotide metabolism; nucleotide salvage pathway.</text>
</comment>
<comment type="similarity">
    <text evidence="2">Belongs to the nucleoside deoxyribosyltransferase family.</text>
</comment>
<feature type="chain" id="PRO_0000220065" description="Nucleoside deoxyribosyltransferase">
    <location>
        <begin position="1"/>
        <end position="168"/>
    </location>
</feature>
<feature type="active site" description="Nucleophile" evidence="1">
    <location>
        <position position="103"/>
    </location>
</feature>
<organism>
    <name type="scientific">Limosilactobacillus fermentum</name>
    <name type="common">Lactobacillus fermentum</name>
    <dbReference type="NCBI Taxonomy" id="1613"/>
    <lineage>
        <taxon>Bacteria</taxon>
        <taxon>Bacillati</taxon>
        <taxon>Bacillota</taxon>
        <taxon>Bacilli</taxon>
        <taxon>Lactobacillales</taxon>
        <taxon>Lactobacillaceae</taxon>
        <taxon>Limosilactobacillus</taxon>
    </lineage>
</organism>
<gene>
    <name type="primary">ntd</name>
</gene>
<keyword id="KW-0546">Nucleotide metabolism</keyword>
<keyword id="KW-0808">Transferase</keyword>
<accession>Q6YNI5</accession>
<reference key="1">
    <citation type="submission" date="2001-11" db="EMBL/GenBank/DDBJ databases">
        <title>Characteriztion of the Lactobacillus fermentum N-deoxyribosyltransferase.</title>
        <authorList>
            <person name="Kaminski P.A."/>
        </authorList>
    </citation>
    <scope>NUCLEOTIDE SEQUENCE [GENOMIC DNA]</scope>
    <source>
        <strain>ATCC 14931 / DSM 20052 / JCM 1173 / NBRC 15885 / NCDO 1750 / NCIMB 11840 / NRRL B-4524 / Bb28</strain>
    </source>
</reference>
<protein>
    <recommendedName>
        <fullName>Nucleoside deoxyribosyltransferase</fullName>
        <shortName>N-deoxyribosyltransferase</shortName>
        <ecNumber>2.4.2.6</ecNumber>
    </recommendedName>
</protein>
<dbReference type="EC" id="2.4.2.6"/>
<dbReference type="EMBL" id="AY064168">
    <property type="protein sequence ID" value="AAL73115.1"/>
    <property type="molecule type" value="Genomic_DNA"/>
</dbReference>
<dbReference type="SMR" id="Q6YNI5"/>
<dbReference type="BRENDA" id="2.4.2.6">
    <property type="organism ID" value="2856"/>
</dbReference>
<dbReference type="UniPathway" id="UPA00312"/>
<dbReference type="GO" id="GO:0050144">
    <property type="term" value="F:nucleoside deoxyribosyltransferase activity"/>
    <property type="evidence" value="ECO:0007669"/>
    <property type="project" value="UniProtKB-EC"/>
</dbReference>
<dbReference type="GO" id="GO:0043173">
    <property type="term" value="P:nucleotide salvage"/>
    <property type="evidence" value="ECO:0007669"/>
    <property type="project" value="UniProtKB-UniPathway"/>
</dbReference>
<dbReference type="Gene3D" id="3.40.50.450">
    <property type="match status" value="1"/>
</dbReference>
<dbReference type="InterPro" id="IPR007710">
    <property type="entry name" value="Nucleoside_deoxyribTrfase"/>
</dbReference>
<dbReference type="Pfam" id="PF05014">
    <property type="entry name" value="Nuc_deoxyrib_tr"/>
    <property type="match status" value="1"/>
</dbReference>
<dbReference type="SUPFAM" id="SSF52309">
    <property type="entry name" value="N-(deoxy)ribosyltransferase-like"/>
    <property type="match status" value="1"/>
</dbReference>
<evidence type="ECO:0000250" key="1"/>
<evidence type="ECO:0000305" key="2"/>
<proteinExistence type="inferred from homology"/>
<name>NTD_LIMFE</name>
<sequence>MKNTDPVANTKIYLATSFFNEEQRARIPQALAQLEANPTVGVVHQPFDFQYKDARVDSDPAGVFGSLEWQIATYNNDLNAVGTSDVCVALYDMDQIDEGICMEIGMFVALHKPIVLLPFTKKDKSAYEANLMLARGVTTWLEPNDFSPLKDFNFNHPMAQPFPPFKVF</sequence>